<sequence length="345" mass="39852">MSSLRLRLCLLLLLPITISCVTVTLTDLPAFREAPAFRNGRECSKTTWIPSDHEHNPSIIHIAMTLDAIYLRGSVAGVFSVLQHASCPENIVFHFIATHRRSADLRRIISSTFPYLTYHIYHFDPNLVRSKISSSIRRALDQPLNYARIYLADLLPIAVRRVIYFDSDLVVVDDVAKLWRIDLRRHVVGAPEYCHANFTNYFTSRFWSSQGYKSALKDRKPCYFNTGVMVIDLGKWRERRVTVKLETWMRIQKRHRIYELGSLPPFLLVFAGDVEPVEHRWNQHGLGGDNLEGLCRNLHPGPVSLLHWSGKGKPWLRLDSRRPCPLDSLWAPYDLFRYSPLISDS</sequence>
<gene>
    <name type="primary">GATL3</name>
    <name type="ordered locus">At1g13250</name>
    <name type="ORF">T6J4.1</name>
    <name type="ORF">T6J4.2</name>
</gene>
<feature type="chain" id="PRO_0000392605" description="Probable galacturonosyltransferase-like 3">
    <location>
        <begin position="1"/>
        <end position="345"/>
    </location>
</feature>
<feature type="topological domain" description="Cytoplasmic" evidence="2">
    <location>
        <begin position="1"/>
        <end position="7"/>
    </location>
</feature>
<feature type="transmembrane region" description="Helical; Signal-anchor for type II membrane protein" evidence="2">
    <location>
        <begin position="8"/>
        <end position="28"/>
    </location>
</feature>
<feature type="topological domain" description="Lumenal" evidence="2">
    <location>
        <begin position="29"/>
        <end position="345"/>
    </location>
</feature>
<feature type="glycosylation site" description="N-linked (GlcNAc...) asparagine" evidence="2">
    <location>
        <position position="197"/>
    </location>
</feature>
<feature type="sequence conflict" description="In Ref. 3; AAM61338." evidence="3" ref="3">
    <original>Y</original>
    <variation>F</variation>
    <location>
        <position position="338"/>
    </location>
</feature>
<evidence type="ECO:0000250" key="1"/>
<evidence type="ECO:0000255" key="2"/>
<evidence type="ECO:0000305" key="3"/>
<organism>
    <name type="scientific">Arabidopsis thaliana</name>
    <name type="common">Mouse-ear cress</name>
    <dbReference type="NCBI Taxonomy" id="3702"/>
    <lineage>
        <taxon>Eukaryota</taxon>
        <taxon>Viridiplantae</taxon>
        <taxon>Streptophyta</taxon>
        <taxon>Embryophyta</taxon>
        <taxon>Tracheophyta</taxon>
        <taxon>Spermatophyta</taxon>
        <taxon>Magnoliopsida</taxon>
        <taxon>eudicotyledons</taxon>
        <taxon>Gunneridae</taxon>
        <taxon>Pentapetalae</taxon>
        <taxon>rosids</taxon>
        <taxon>malvids</taxon>
        <taxon>Brassicales</taxon>
        <taxon>Brassicaceae</taxon>
        <taxon>Camelineae</taxon>
        <taxon>Arabidopsis</taxon>
    </lineage>
</organism>
<keyword id="KW-0961">Cell wall biogenesis/degradation</keyword>
<keyword id="KW-0325">Glycoprotein</keyword>
<keyword id="KW-0328">Glycosyltransferase</keyword>
<keyword id="KW-0333">Golgi apparatus</keyword>
<keyword id="KW-0472">Membrane</keyword>
<keyword id="KW-1185">Reference proteome</keyword>
<keyword id="KW-0735">Signal-anchor</keyword>
<keyword id="KW-0808">Transferase</keyword>
<keyword id="KW-0812">Transmembrane</keyword>
<keyword id="KW-1133">Transmembrane helix</keyword>
<name>GATL3_ARATH</name>
<protein>
    <recommendedName>
        <fullName>Probable galacturonosyltransferase-like 3</fullName>
        <ecNumber>2.4.1.-</ecNumber>
    </recommendedName>
</protein>
<dbReference type="EC" id="2.4.1.-"/>
<dbReference type="EMBL" id="AC011810">
    <property type="protein sequence ID" value="AAG09558.1"/>
    <property type="status" value="ALT_SEQ"/>
    <property type="molecule type" value="Genomic_DNA"/>
</dbReference>
<dbReference type="EMBL" id="CP002684">
    <property type="protein sequence ID" value="AEE28990.1"/>
    <property type="molecule type" value="Genomic_DNA"/>
</dbReference>
<dbReference type="EMBL" id="AY084770">
    <property type="protein sequence ID" value="AAM61338.1"/>
    <property type="molecule type" value="mRNA"/>
</dbReference>
<dbReference type="EMBL" id="BT026509">
    <property type="protein sequence ID" value="ABH04616.1"/>
    <property type="molecule type" value="mRNA"/>
</dbReference>
<dbReference type="EMBL" id="AK119122">
    <property type="protein sequence ID" value="BAC43692.1"/>
    <property type="status" value="ALT_INIT"/>
    <property type="molecule type" value="mRNA"/>
</dbReference>
<dbReference type="PIR" id="A86267">
    <property type="entry name" value="A86267"/>
</dbReference>
<dbReference type="RefSeq" id="NP_563925.1">
    <property type="nucleotide sequence ID" value="NM_101196.3"/>
</dbReference>
<dbReference type="SMR" id="Q0V7R1"/>
<dbReference type="FunCoup" id="Q0V7R1">
    <property type="interactions" value="806"/>
</dbReference>
<dbReference type="STRING" id="3702.Q0V7R1"/>
<dbReference type="CAZy" id="GT8">
    <property type="family name" value="Glycosyltransferase Family 8"/>
</dbReference>
<dbReference type="GlyCosmos" id="Q0V7R1">
    <property type="glycosylation" value="1 site, No reported glycans"/>
</dbReference>
<dbReference type="GlyGen" id="Q0V7R1">
    <property type="glycosylation" value="1 site"/>
</dbReference>
<dbReference type="iPTMnet" id="Q0V7R1"/>
<dbReference type="PaxDb" id="3702-AT1G13250.1"/>
<dbReference type="ProteomicsDB" id="230451"/>
<dbReference type="EnsemblPlants" id="AT1G13250.1">
    <property type="protein sequence ID" value="AT1G13250.1"/>
    <property type="gene ID" value="AT1G13250"/>
</dbReference>
<dbReference type="GeneID" id="837885"/>
<dbReference type="Gramene" id="AT1G13250.1">
    <property type="protein sequence ID" value="AT1G13250.1"/>
    <property type="gene ID" value="AT1G13250"/>
</dbReference>
<dbReference type="KEGG" id="ath:AT1G13250"/>
<dbReference type="Araport" id="AT1G13250"/>
<dbReference type="TAIR" id="AT1G13250">
    <property type="gene designation" value="GATL3"/>
</dbReference>
<dbReference type="eggNOG" id="ENOG502QTN8">
    <property type="taxonomic scope" value="Eukaryota"/>
</dbReference>
<dbReference type="HOGENOM" id="CLU_034713_0_0_1"/>
<dbReference type="InParanoid" id="Q0V7R1"/>
<dbReference type="OMA" id="YKQHSNI"/>
<dbReference type="OrthoDB" id="411524at2759"/>
<dbReference type="PhylomeDB" id="Q0V7R1"/>
<dbReference type="UniPathway" id="UPA00845"/>
<dbReference type="PRO" id="PR:Q0V7R1"/>
<dbReference type="Proteomes" id="UP000006548">
    <property type="component" value="Chromosome 1"/>
</dbReference>
<dbReference type="ExpressionAtlas" id="Q0V7R1">
    <property type="expression patterns" value="baseline and differential"/>
</dbReference>
<dbReference type="GO" id="GO:0005794">
    <property type="term" value="C:Golgi apparatus"/>
    <property type="evidence" value="ECO:0000314"/>
    <property type="project" value="TAIR"/>
</dbReference>
<dbReference type="GO" id="GO:0000139">
    <property type="term" value="C:Golgi membrane"/>
    <property type="evidence" value="ECO:0007669"/>
    <property type="project" value="UniProtKB-SubCell"/>
</dbReference>
<dbReference type="GO" id="GO:0047262">
    <property type="term" value="F:polygalacturonate 4-alpha-galacturonosyltransferase activity"/>
    <property type="evidence" value="ECO:0000250"/>
    <property type="project" value="TAIR"/>
</dbReference>
<dbReference type="GO" id="GO:0071555">
    <property type="term" value="P:cell wall organization"/>
    <property type="evidence" value="ECO:0007669"/>
    <property type="project" value="UniProtKB-KW"/>
</dbReference>
<dbReference type="GO" id="GO:0045489">
    <property type="term" value="P:pectin biosynthetic process"/>
    <property type="evidence" value="ECO:0007669"/>
    <property type="project" value="UniProtKB-UniPathway"/>
</dbReference>
<dbReference type="FunFam" id="3.90.550.10:FF:000024">
    <property type="entry name" value="Hexosyltransferase"/>
    <property type="match status" value="1"/>
</dbReference>
<dbReference type="Gene3D" id="3.90.550.10">
    <property type="entry name" value="Spore Coat Polysaccharide Biosynthesis Protein SpsA, Chain A"/>
    <property type="match status" value="1"/>
</dbReference>
<dbReference type="InterPro" id="IPR002495">
    <property type="entry name" value="Glyco_trans_8"/>
</dbReference>
<dbReference type="InterPro" id="IPR050748">
    <property type="entry name" value="Glycosyltrans_8_dom-fam"/>
</dbReference>
<dbReference type="InterPro" id="IPR029044">
    <property type="entry name" value="Nucleotide-diphossugar_trans"/>
</dbReference>
<dbReference type="PANTHER" id="PTHR13778:SF13">
    <property type="entry name" value="GALACTURONOSYLTRANSFERASE-LIKE 3-RELATED"/>
    <property type="match status" value="1"/>
</dbReference>
<dbReference type="PANTHER" id="PTHR13778">
    <property type="entry name" value="GLYCOSYLTRANSFERASE 8 DOMAIN-CONTAINING PROTEIN"/>
    <property type="match status" value="1"/>
</dbReference>
<dbReference type="Pfam" id="PF01501">
    <property type="entry name" value="Glyco_transf_8"/>
    <property type="match status" value="1"/>
</dbReference>
<dbReference type="SUPFAM" id="SSF53448">
    <property type="entry name" value="Nucleotide-diphospho-sugar transferases"/>
    <property type="match status" value="1"/>
</dbReference>
<accession>Q0V7R1</accession>
<accession>Q8GW28</accession>
<accession>Q8LFL7</accession>
<accession>Q9FX71</accession>
<comment type="function">
    <text evidence="1">May be involved in pectin and/or xylans biosynthesis in cell walls.</text>
</comment>
<comment type="pathway">
    <text>Glycan metabolism; pectin biosynthesis.</text>
</comment>
<comment type="subcellular location">
    <subcellularLocation>
        <location evidence="1">Golgi apparatus membrane</location>
        <topology evidence="1">Single-pass type II membrane protein</topology>
    </subcellularLocation>
</comment>
<comment type="similarity">
    <text evidence="3">Belongs to the glycosyltransferase 8 family.</text>
</comment>
<comment type="sequence caution" evidence="3">
    <conflict type="erroneous gene model prediction">
        <sequence resource="EMBL-CDS" id="AAG09558"/>
    </conflict>
</comment>
<comment type="sequence caution" evidence="3">
    <conflict type="erroneous initiation">
        <sequence resource="EMBL-CDS" id="BAC43692"/>
    </conflict>
</comment>
<reference key="1">
    <citation type="journal article" date="2000" name="Nature">
        <title>Sequence and analysis of chromosome 1 of the plant Arabidopsis thaliana.</title>
        <authorList>
            <person name="Theologis A."/>
            <person name="Ecker J.R."/>
            <person name="Palm C.J."/>
            <person name="Federspiel N.A."/>
            <person name="Kaul S."/>
            <person name="White O."/>
            <person name="Alonso J."/>
            <person name="Altafi H."/>
            <person name="Araujo R."/>
            <person name="Bowman C.L."/>
            <person name="Brooks S.Y."/>
            <person name="Buehler E."/>
            <person name="Chan A."/>
            <person name="Chao Q."/>
            <person name="Chen H."/>
            <person name="Cheuk R.F."/>
            <person name="Chin C.W."/>
            <person name="Chung M.K."/>
            <person name="Conn L."/>
            <person name="Conway A.B."/>
            <person name="Conway A.R."/>
            <person name="Creasy T.H."/>
            <person name="Dewar K."/>
            <person name="Dunn P."/>
            <person name="Etgu P."/>
            <person name="Feldblyum T.V."/>
            <person name="Feng J.-D."/>
            <person name="Fong B."/>
            <person name="Fujii C.Y."/>
            <person name="Gill J.E."/>
            <person name="Goldsmith A.D."/>
            <person name="Haas B."/>
            <person name="Hansen N.F."/>
            <person name="Hughes B."/>
            <person name="Huizar L."/>
            <person name="Hunter J.L."/>
            <person name="Jenkins J."/>
            <person name="Johnson-Hopson C."/>
            <person name="Khan S."/>
            <person name="Khaykin E."/>
            <person name="Kim C.J."/>
            <person name="Koo H.L."/>
            <person name="Kremenetskaia I."/>
            <person name="Kurtz D.B."/>
            <person name="Kwan A."/>
            <person name="Lam B."/>
            <person name="Langin-Hooper S."/>
            <person name="Lee A."/>
            <person name="Lee J.M."/>
            <person name="Lenz C.A."/>
            <person name="Li J.H."/>
            <person name="Li Y.-P."/>
            <person name="Lin X."/>
            <person name="Liu S.X."/>
            <person name="Liu Z.A."/>
            <person name="Luros J.S."/>
            <person name="Maiti R."/>
            <person name="Marziali A."/>
            <person name="Militscher J."/>
            <person name="Miranda M."/>
            <person name="Nguyen M."/>
            <person name="Nierman W.C."/>
            <person name="Osborne B.I."/>
            <person name="Pai G."/>
            <person name="Peterson J."/>
            <person name="Pham P.K."/>
            <person name="Rizzo M."/>
            <person name="Rooney T."/>
            <person name="Rowley D."/>
            <person name="Sakano H."/>
            <person name="Salzberg S.L."/>
            <person name="Schwartz J.R."/>
            <person name="Shinn P."/>
            <person name="Southwick A.M."/>
            <person name="Sun H."/>
            <person name="Tallon L.J."/>
            <person name="Tambunga G."/>
            <person name="Toriumi M.J."/>
            <person name="Town C.D."/>
            <person name="Utterback T."/>
            <person name="Van Aken S."/>
            <person name="Vaysberg M."/>
            <person name="Vysotskaia V.S."/>
            <person name="Walker M."/>
            <person name="Wu D."/>
            <person name="Yu G."/>
            <person name="Fraser C.M."/>
            <person name="Venter J.C."/>
            <person name="Davis R.W."/>
        </authorList>
    </citation>
    <scope>NUCLEOTIDE SEQUENCE [LARGE SCALE GENOMIC DNA]</scope>
    <source>
        <strain>cv. Columbia</strain>
    </source>
</reference>
<reference key="2">
    <citation type="journal article" date="2017" name="Plant J.">
        <title>Araport11: a complete reannotation of the Arabidopsis thaliana reference genome.</title>
        <authorList>
            <person name="Cheng C.Y."/>
            <person name="Krishnakumar V."/>
            <person name="Chan A.P."/>
            <person name="Thibaud-Nissen F."/>
            <person name="Schobel S."/>
            <person name="Town C.D."/>
        </authorList>
    </citation>
    <scope>GENOME REANNOTATION</scope>
    <source>
        <strain>cv. Columbia</strain>
    </source>
</reference>
<reference key="3">
    <citation type="submission" date="2002-03" db="EMBL/GenBank/DDBJ databases">
        <title>Full-length cDNA from Arabidopsis thaliana.</title>
        <authorList>
            <person name="Brover V.V."/>
            <person name="Troukhan M.E."/>
            <person name="Alexandrov N.A."/>
            <person name="Lu Y.-P."/>
            <person name="Flavell R.B."/>
            <person name="Feldmann K.A."/>
        </authorList>
    </citation>
    <scope>NUCLEOTIDE SEQUENCE [LARGE SCALE MRNA]</scope>
</reference>
<reference key="4">
    <citation type="submission" date="2006-08" db="EMBL/GenBank/DDBJ databases">
        <title>Arabidopsis ORF Clones.</title>
        <authorList>
            <person name="Quinitio C."/>
            <person name="Chen H."/>
            <person name="Kim C.J."/>
            <person name="Shinn P."/>
            <person name="Ecker J.R."/>
        </authorList>
    </citation>
    <scope>NUCLEOTIDE SEQUENCE [LARGE SCALE MRNA]</scope>
    <source>
        <strain>cv. Columbia</strain>
    </source>
</reference>
<reference key="5">
    <citation type="journal article" date="2002" name="Science">
        <title>Functional annotation of a full-length Arabidopsis cDNA collection.</title>
        <authorList>
            <person name="Seki M."/>
            <person name="Narusaka M."/>
            <person name="Kamiya A."/>
            <person name="Ishida J."/>
            <person name="Satou M."/>
            <person name="Sakurai T."/>
            <person name="Nakajima M."/>
            <person name="Enju A."/>
            <person name="Akiyama K."/>
            <person name="Oono Y."/>
            <person name="Muramatsu M."/>
            <person name="Hayashizaki Y."/>
            <person name="Kawai J."/>
            <person name="Carninci P."/>
            <person name="Itoh M."/>
            <person name="Ishii Y."/>
            <person name="Arakawa T."/>
            <person name="Shibata K."/>
            <person name="Shinagawa A."/>
            <person name="Shinozaki K."/>
        </authorList>
    </citation>
    <scope>NUCLEOTIDE SEQUENCE [LARGE SCALE MRNA] OF 9-345</scope>
    <source>
        <strain>cv. Columbia</strain>
    </source>
</reference>
<reference key="6">
    <citation type="journal article" date="2006" name="Proc. Natl. Acad. Sci. U.S.A.">
        <title>Functional identification of an Arabidopsis pectin biosynthetic homogalacturonan galacturonosyltransferase.</title>
        <authorList>
            <person name="Sterling J.D."/>
            <person name="Atmodjo M.A."/>
            <person name="Inwood S.E."/>
            <person name="Kumar Kolli V.S."/>
            <person name="Quigley H.F."/>
            <person name="Hahn M.G."/>
            <person name="Mohnen D."/>
        </authorList>
    </citation>
    <scope>GENE FAMILY</scope>
    <scope>NOMENCLATURE</scope>
</reference>
<proteinExistence type="evidence at transcript level"/>